<name>SOSD1_PONAB</name>
<evidence type="ECO:0000250" key="1"/>
<evidence type="ECO:0000255" key="2"/>
<evidence type="ECO:0000255" key="3">
    <source>
        <dbReference type="PROSITE-ProRule" id="PRU00039"/>
    </source>
</evidence>
<evidence type="ECO:0000256" key="4">
    <source>
        <dbReference type="SAM" id="MobiDB-lite"/>
    </source>
</evidence>
<evidence type="ECO:0000305" key="5"/>
<sequence length="206" mass="23297">MLPPAIHFYLLPLACILMKSCLAFKNDATEILYSHVVKPVPAHPSSNSTLNQARNGGRHFSNTGLDRNTRVQVGCRELRSTKYISDGQCTSISPLKELVCAGECLPLSVLPNWIGGGYGTKYWSRRSSQEWRCVNDKTRTQRIQLQCQDGSTRTYKITVVTACKCKRYTRQHNESSHNFESMSPAKPVQHHRERKRASKSSKHSMS</sequence>
<reference key="1">
    <citation type="submission" date="2004-11" db="EMBL/GenBank/DDBJ databases">
        <authorList>
            <consortium name="The German cDNA consortium"/>
        </authorList>
    </citation>
    <scope>NUCLEOTIDE SEQUENCE [LARGE SCALE MRNA]</scope>
    <source>
        <tissue>Kidney</tissue>
    </source>
</reference>
<accession>Q5R5D2</accession>
<comment type="function">
    <text evidence="1">Directly antagonizes activity of BMP2, BMP4, BMP6 and BMP7 in a dose-dependent manner. Enhances Wnt signaling and inhibits TGF-beta signaling. May be involved in the onset of endometrial receptivity for implantation/sensitization for the decidual cell reaction (By similarity).</text>
</comment>
<comment type="subunit">
    <text evidence="1">Interacts with BMP2, BMP4, BMP6 and BMP7 with high affinity.</text>
</comment>
<comment type="subcellular location">
    <subcellularLocation>
        <location evidence="1">Secreted</location>
    </subcellularLocation>
</comment>
<comment type="similarity">
    <text evidence="5">Belongs to the sclerostin family.</text>
</comment>
<protein>
    <recommendedName>
        <fullName>Sclerostin domain-containing protein 1</fullName>
    </recommendedName>
</protein>
<gene>
    <name type="primary">SOSTDC1</name>
</gene>
<feature type="signal peptide" evidence="1">
    <location>
        <begin position="1"/>
        <end position="23"/>
    </location>
</feature>
<feature type="chain" id="PRO_0000033182" description="Sclerostin domain-containing protein 1">
    <location>
        <begin position="24"/>
        <end position="206"/>
    </location>
</feature>
<feature type="domain" description="CTCK" evidence="3">
    <location>
        <begin position="75"/>
        <end position="170"/>
    </location>
</feature>
<feature type="region of interest" description="Disordered" evidence="4">
    <location>
        <begin position="176"/>
        <end position="206"/>
    </location>
</feature>
<feature type="compositionally biased region" description="Basic residues" evidence="4">
    <location>
        <begin position="188"/>
        <end position="206"/>
    </location>
</feature>
<feature type="glycosylation site" description="N-linked (GlcNAc...) asparagine" evidence="2">
    <location>
        <position position="47"/>
    </location>
</feature>
<feature type="glycosylation site" description="N-linked (GlcNAc...) asparagine" evidence="2">
    <location>
        <position position="173"/>
    </location>
</feature>
<feature type="disulfide bond" evidence="3">
    <location>
        <begin position="75"/>
        <end position="133"/>
    </location>
</feature>
<feature type="disulfide bond" evidence="3">
    <location>
        <begin position="89"/>
        <end position="147"/>
    </location>
</feature>
<feature type="disulfide bond" evidence="3">
    <location>
        <begin position="100"/>
        <end position="163"/>
    </location>
</feature>
<feature type="disulfide bond" evidence="3">
    <location>
        <begin position="104"/>
        <end position="165"/>
    </location>
</feature>
<proteinExistence type="evidence at transcript level"/>
<dbReference type="EMBL" id="CR860930">
    <property type="protein sequence ID" value="CAH93034.1"/>
    <property type="molecule type" value="mRNA"/>
</dbReference>
<dbReference type="RefSeq" id="NP_001126795.1">
    <property type="nucleotide sequence ID" value="NM_001133323.1"/>
</dbReference>
<dbReference type="SMR" id="Q5R5D2"/>
<dbReference type="FunCoup" id="Q5R5D2">
    <property type="interactions" value="157"/>
</dbReference>
<dbReference type="GlyCosmos" id="Q5R5D2">
    <property type="glycosylation" value="2 sites, No reported glycans"/>
</dbReference>
<dbReference type="Ensembl" id="ENSPPYT00000020701.3">
    <property type="protein sequence ID" value="ENSPPYP00000019915.2"/>
    <property type="gene ID" value="ENSPPYG00000017767.3"/>
</dbReference>
<dbReference type="GeneID" id="100173799"/>
<dbReference type="KEGG" id="pon:100173799"/>
<dbReference type="CTD" id="25928"/>
<dbReference type="eggNOG" id="ENOG502QV5G">
    <property type="taxonomic scope" value="Eukaryota"/>
</dbReference>
<dbReference type="GeneTree" id="ENSGT00390000014900"/>
<dbReference type="HOGENOM" id="CLU_087969_0_0_1"/>
<dbReference type="InParanoid" id="Q5R5D2"/>
<dbReference type="OMA" id="ACIFTKS"/>
<dbReference type="OrthoDB" id="6624188at2759"/>
<dbReference type="TreeFam" id="TF353019"/>
<dbReference type="Proteomes" id="UP000001595">
    <property type="component" value="Chromosome 7"/>
</dbReference>
<dbReference type="GO" id="GO:0005615">
    <property type="term" value="C:extracellular space"/>
    <property type="evidence" value="ECO:0007669"/>
    <property type="project" value="Ensembl"/>
</dbReference>
<dbReference type="GO" id="GO:0036122">
    <property type="term" value="F:BMP binding"/>
    <property type="evidence" value="ECO:0007669"/>
    <property type="project" value="Ensembl"/>
</dbReference>
<dbReference type="GO" id="GO:0098821">
    <property type="term" value="F:BMP receptor activity"/>
    <property type="evidence" value="ECO:0007669"/>
    <property type="project" value="Ensembl"/>
</dbReference>
<dbReference type="GO" id="GO:0060070">
    <property type="term" value="P:canonical Wnt signaling pathway"/>
    <property type="evidence" value="ECO:0007669"/>
    <property type="project" value="Ensembl"/>
</dbReference>
<dbReference type="GO" id="GO:0072148">
    <property type="term" value="P:epithelial cell fate commitment"/>
    <property type="evidence" value="ECO:0007669"/>
    <property type="project" value="Ensembl"/>
</dbReference>
<dbReference type="GO" id="GO:0031069">
    <property type="term" value="P:hair follicle morphogenesis"/>
    <property type="evidence" value="ECO:0007669"/>
    <property type="project" value="Ensembl"/>
</dbReference>
<dbReference type="GO" id="GO:0060648">
    <property type="term" value="P:mammary gland bud morphogenesis"/>
    <property type="evidence" value="ECO:0007669"/>
    <property type="project" value="Ensembl"/>
</dbReference>
<dbReference type="GO" id="GO:0030514">
    <property type="term" value="P:negative regulation of BMP signaling pathway"/>
    <property type="evidence" value="ECO:0007669"/>
    <property type="project" value="Ensembl"/>
</dbReference>
<dbReference type="GO" id="GO:0090090">
    <property type="term" value="P:negative regulation of canonical Wnt signaling pathway"/>
    <property type="evidence" value="ECO:0007669"/>
    <property type="project" value="Ensembl"/>
</dbReference>
<dbReference type="GO" id="GO:0010454">
    <property type="term" value="P:negative regulation of cell fate commitment"/>
    <property type="evidence" value="ECO:0007669"/>
    <property type="project" value="Ensembl"/>
</dbReference>
<dbReference type="GO" id="GO:2000016">
    <property type="term" value="P:negative regulation of determination of dorsal identity"/>
    <property type="evidence" value="ECO:0007669"/>
    <property type="project" value="Ensembl"/>
</dbReference>
<dbReference type="GO" id="GO:0045662">
    <property type="term" value="P:negative regulation of myoblast differentiation"/>
    <property type="evidence" value="ECO:0007669"/>
    <property type="project" value="Ensembl"/>
</dbReference>
<dbReference type="GO" id="GO:0042475">
    <property type="term" value="P:odontogenesis of dentin-containing tooth"/>
    <property type="evidence" value="ECO:0007669"/>
    <property type="project" value="Ensembl"/>
</dbReference>
<dbReference type="GO" id="GO:0007389">
    <property type="term" value="P:pattern specification process"/>
    <property type="evidence" value="ECO:0007669"/>
    <property type="project" value="Ensembl"/>
</dbReference>
<dbReference type="Gene3D" id="2.10.90.10">
    <property type="entry name" value="Cystine-knot cytokines"/>
    <property type="match status" value="1"/>
</dbReference>
<dbReference type="InterPro" id="IPR006207">
    <property type="entry name" value="Cys_knot_C"/>
</dbReference>
<dbReference type="InterPro" id="IPR029034">
    <property type="entry name" value="Cystine-knot_cytokine"/>
</dbReference>
<dbReference type="InterPro" id="IPR008835">
    <property type="entry name" value="Sclerostin/SOSTDC1"/>
</dbReference>
<dbReference type="PANTHER" id="PTHR14903:SF5">
    <property type="entry name" value="SCLEROSTIN DOMAIN-CONTAINING PROTEIN 1"/>
    <property type="match status" value="1"/>
</dbReference>
<dbReference type="PANTHER" id="PTHR14903">
    <property type="entry name" value="SCLEROSTIN-RELATED"/>
    <property type="match status" value="1"/>
</dbReference>
<dbReference type="Pfam" id="PF05463">
    <property type="entry name" value="Sclerostin"/>
    <property type="match status" value="1"/>
</dbReference>
<dbReference type="PROSITE" id="PS01225">
    <property type="entry name" value="CTCK_2"/>
    <property type="match status" value="1"/>
</dbReference>
<organism>
    <name type="scientific">Pongo abelii</name>
    <name type="common">Sumatran orangutan</name>
    <name type="synonym">Pongo pygmaeus abelii</name>
    <dbReference type="NCBI Taxonomy" id="9601"/>
    <lineage>
        <taxon>Eukaryota</taxon>
        <taxon>Metazoa</taxon>
        <taxon>Chordata</taxon>
        <taxon>Craniata</taxon>
        <taxon>Vertebrata</taxon>
        <taxon>Euteleostomi</taxon>
        <taxon>Mammalia</taxon>
        <taxon>Eutheria</taxon>
        <taxon>Euarchontoglires</taxon>
        <taxon>Primates</taxon>
        <taxon>Haplorrhini</taxon>
        <taxon>Catarrhini</taxon>
        <taxon>Hominidae</taxon>
        <taxon>Pongo</taxon>
    </lineage>
</organism>
<keyword id="KW-1015">Disulfide bond</keyword>
<keyword id="KW-0325">Glycoprotein</keyword>
<keyword id="KW-1185">Reference proteome</keyword>
<keyword id="KW-0964">Secreted</keyword>
<keyword id="KW-0732">Signal</keyword>
<keyword id="KW-0879">Wnt signaling pathway</keyword>